<gene>
    <name evidence="7" type="primary">Tmem30a</name>
    <name type="synonym">Cdc50a</name>
</gene>
<dbReference type="EMBL" id="BC079203">
    <property type="protein sequence ID" value="AAH79203.1"/>
    <property type="molecule type" value="mRNA"/>
</dbReference>
<dbReference type="RefSeq" id="NP_001004248.1">
    <property type="nucleotide sequence ID" value="NM_001004248.2"/>
</dbReference>
<dbReference type="SMR" id="Q6AY41"/>
<dbReference type="BioGRID" id="256740">
    <property type="interactions" value="1"/>
</dbReference>
<dbReference type="FunCoup" id="Q6AY41">
    <property type="interactions" value="3665"/>
</dbReference>
<dbReference type="STRING" id="10116.ENSRNOP00000070259"/>
<dbReference type="GlyCosmos" id="Q6AY41">
    <property type="glycosylation" value="2 sites, No reported glycans"/>
</dbReference>
<dbReference type="GlyGen" id="Q6AY41">
    <property type="glycosylation" value="3 sites"/>
</dbReference>
<dbReference type="iPTMnet" id="Q6AY41"/>
<dbReference type="PhosphoSitePlus" id="Q6AY41"/>
<dbReference type="jPOST" id="Q6AY41"/>
<dbReference type="PaxDb" id="10116-ENSRNOP00000015299"/>
<dbReference type="Ensembl" id="ENSRNOT00000015299.6">
    <property type="protein sequence ID" value="ENSRNOP00000015299.4"/>
    <property type="gene ID" value="ENSRNOG00000010895.7"/>
</dbReference>
<dbReference type="GeneID" id="300857"/>
<dbReference type="KEGG" id="rno:300857"/>
<dbReference type="UCSC" id="RGD:1303315">
    <property type="organism name" value="rat"/>
</dbReference>
<dbReference type="AGR" id="RGD:1303315"/>
<dbReference type="CTD" id="55754"/>
<dbReference type="RGD" id="1303315">
    <property type="gene designation" value="Tmem30a"/>
</dbReference>
<dbReference type="eggNOG" id="KOG2952">
    <property type="taxonomic scope" value="Eukaryota"/>
</dbReference>
<dbReference type="GeneTree" id="ENSGT00390000004660"/>
<dbReference type="HOGENOM" id="CLU_025025_1_0_1"/>
<dbReference type="InParanoid" id="Q6AY41"/>
<dbReference type="Reactome" id="R-RNO-6798695">
    <property type="pathway name" value="Neutrophil degranulation"/>
</dbReference>
<dbReference type="PRO" id="PR:Q6AY41"/>
<dbReference type="Proteomes" id="UP000002494">
    <property type="component" value="Chromosome 8"/>
</dbReference>
<dbReference type="Bgee" id="ENSRNOG00000010895">
    <property type="expression patterns" value="Expressed in cerebellum and 20 other cell types or tissues"/>
</dbReference>
<dbReference type="ExpressionAtlas" id="Q6AY41">
    <property type="expression patterns" value="baseline and differential"/>
</dbReference>
<dbReference type="GO" id="GO:0016324">
    <property type="term" value="C:apical plasma membrane"/>
    <property type="evidence" value="ECO:0007669"/>
    <property type="project" value="UniProtKB-SubCell"/>
</dbReference>
<dbReference type="GO" id="GO:0031901">
    <property type="term" value="C:early endosome membrane"/>
    <property type="evidence" value="ECO:0000266"/>
    <property type="project" value="RGD"/>
</dbReference>
<dbReference type="GO" id="GO:0005783">
    <property type="term" value="C:endoplasmic reticulum"/>
    <property type="evidence" value="ECO:0000266"/>
    <property type="project" value="RGD"/>
</dbReference>
<dbReference type="GO" id="GO:0005794">
    <property type="term" value="C:Golgi apparatus"/>
    <property type="evidence" value="ECO:0000318"/>
    <property type="project" value="GO_Central"/>
</dbReference>
<dbReference type="GO" id="GO:0031902">
    <property type="term" value="C:late endosome membrane"/>
    <property type="evidence" value="ECO:0000266"/>
    <property type="project" value="RGD"/>
</dbReference>
<dbReference type="GO" id="GO:0016020">
    <property type="term" value="C:membrane"/>
    <property type="evidence" value="ECO:0000266"/>
    <property type="project" value="RGD"/>
</dbReference>
<dbReference type="GO" id="GO:1990531">
    <property type="term" value="C:phospholipid-translocating ATPase complex"/>
    <property type="evidence" value="ECO:0000250"/>
    <property type="project" value="UniProtKB"/>
</dbReference>
<dbReference type="GO" id="GO:0001917">
    <property type="term" value="C:photoreceptor inner segment"/>
    <property type="evidence" value="ECO:0007669"/>
    <property type="project" value="UniProtKB-SubCell"/>
</dbReference>
<dbReference type="GO" id="GO:0001750">
    <property type="term" value="C:photoreceptor outer segment"/>
    <property type="evidence" value="ECO:0007669"/>
    <property type="project" value="UniProtKB-SubCell"/>
</dbReference>
<dbReference type="GO" id="GO:0005886">
    <property type="term" value="C:plasma membrane"/>
    <property type="evidence" value="ECO:0000266"/>
    <property type="project" value="RGD"/>
</dbReference>
<dbReference type="GO" id="GO:0030658">
    <property type="term" value="C:transport vesicle membrane"/>
    <property type="evidence" value="ECO:0007669"/>
    <property type="project" value="UniProtKB-SubCell"/>
</dbReference>
<dbReference type="GO" id="GO:0015247">
    <property type="term" value="F:aminophospholipid flippase activity"/>
    <property type="evidence" value="ECO:0000266"/>
    <property type="project" value="RGD"/>
</dbReference>
<dbReference type="GO" id="GO:0005198">
    <property type="term" value="F:structural molecule activity"/>
    <property type="evidence" value="ECO:0000266"/>
    <property type="project" value="RGD"/>
</dbReference>
<dbReference type="GO" id="GO:0015917">
    <property type="term" value="P:aminophospholipid transport"/>
    <property type="evidence" value="ECO:0000266"/>
    <property type="project" value="RGD"/>
</dbReference>
<dbReference type="GO" id="GO:0045332">
    <property type="term" value="P:phospholipid translocation"/>
    <property type="evidence" value="ECO:0000266"/>
    <property type="project" value="RGD"/>
</dbReference>
<dbReference type="GO" id="GO:0010976">
    <property type="term" value="P:positive regulation of neuron projection development"/>
    <property type="evidence" value="ECO:0000266"/>
    <property type="project" value="RGD"/>
</dbReference>
<dbReference type="GO" id="GO:0061092">
    <property type="term" value="P:positive regulation of phospholipid translocation"/>
    <property type="evidence" value="ECO:0000266"/>
    <property type="project" value="RGD"/>
</dbReference>
<dbReference type="GO" id="GO:0070863">
    <property type="term" value="P:positive regulation of protein exit from endoplasmic reticulum"/>
    <property type="evidence" value="ECO:0000266"/>
    <property type="project" value="RGD"/>
</dbReference>
<dbReference type="GO" id="GO:0036010">
    <property type="term" value="P:protein localization to endosome"/>
    <property type="evidence" value="ECO:0000266"/>
    <property type="project" value="RGD"/>
</dbReference>
<dbReference type="GO" id="GO:0006855">
    <property type="term" value="P:xenobiotic transmembrane transport"/>
    <property type="evidence" value="ECO:0000266"/>
    <property type="project" value="RGD"/>
</dbReference>
<dbReference type="InterPro" id="IPR005045">
    <property type="entry name" value="CDC50/LEM3_fam"/>
</dbReference>
<dbReference type="PANTHER" id="PTHR10926">
    <property type="entry name" value="CELL CYCLE CONTROL PROTEIN 50"/>
    <property type="match status" value="1"/>
</dbReference>
<dbReference type="PANTHER" id="PTHR10926:SF17">
    <property type="entry name" value="CELL CYCLE CONTROL PROTEIN 50A"/>
    <property type="match status" value="1"/>
</dbReference>
<dbReference type="Pfam" id="PF03381">
    <property type="entry name" value="CDC50"/>
    <property type="match status" value="1"/>
</dbReference>
<dbReference type="PIRSF" id="PIRSF015840">
    <property type="entry name" value="DUF284_TM_euk"/>
    <property type="match status" value="1"/>
</dbReference>
<proteinExistence type="evidence at protein level"/>
<accession>Q6AY41</accession>
<name>CC50A_RAT</name>
<reference key="1">
    <citation type="journal article" date="2004" name="Genome Res.">
        <title>The status, quality, and expansion of the NIH full-length cDNA project: the Mammalian Gene Collection (MGC).</title>
        <authorList>
            <consortium name="The MGC Project Team"/>
        </authorList>
    </citation>
    <scope>NUCLEOTIDE SEQUENCE [LARGE SCALE MRNA]</scope>
    <source>
        <tissue>Testis</tissue>
    </source>
</reference>
<reference key="2">
    <citation type="journal article" date="2013" name="J. Proteome Res.">
        <title>Site-specific glycan-peptide analysis for determination of N-glycoproteome heterogeneity.</title>
        <authorList>
            <person name="Parker B.L."/>
            <person name="Thaysen-Andersen M."/>
            <person name="Solis N."/>
            <person name="Scott N.E."/>
            <person name="Larsen M.R."/>
            <person name="Graham M.E."/>
            <person name="Packer N.H."/>
            <person name="Cordwell S.J."/>
        </authorList>
    </citation>
    <scope>GLYCOSYLATION [LARGE SCALE ANALYSIS] AT ASN-261</scope>
    <scope>IDENTIFICATION BY MASS SPECTROMETRY [LARGE SCALE ANALYSIS]</scope>
    <source>
        <tissue>Brain</tissue>
    </source>
</reference>
<protein>
    <recommendedName>
        <fullName evidence="6">Cell cycle control protein 50A</fullName>
    </recommendedName>
    <alternativeName>
        <fullName>P4-ATPase flippase complex beta subunit TMEM30A</fullName>
    </alternativeName>
    <alternativeName>
        <fullName>Transmembrane protein 30A</fullName>
    </alternativeName>
</protein>
<keyword id="KW-0007">Acetylation</keyword>
<keyword id="KW-1003">Cell membrane</keyword>
<keyword id="KW-0966">Cell projection</keyword>
<keyword id="KW-0968">Cytoplasmic vesicle</keyword>
<keyword id="KW-1015">Disulfide bond</keyword>
<keyword id="KW-0325">Glycoprotein</keyword>
<keyword id="KW-0333">Golgi apparatus</keyword>
<keyword id="KW-0445">Lipid transport</keyword>
<keyword id="KW-0472">Membrane</keyword>
<keyword id="KW-1185">Reference proteome</keyword>
<keyword id="KW-0812">Transmembrane</keyword>
<keyword id="KW-1133">Transmembrane helix</keyword>
<keyword id="KW-0813">Transport</keyword>
<evidence type="ECO:0000250" key="1"/>
<evidence type="ECO:0000250" key="2">
    <source>
        <dbReference type="UniProtKB" id="Q17QL5"/>
    </source>
</evidence>
<evidence type="ECO:0000250" key="3">
    <source>
        <dbReference type="UniProtKB" id="Q9NV96"/>
    </source>
</evidence>
<evidence type="ECO:0000255" key="4"/>
<evidence type="ECO:0000256" key="5">
    <source>
        <dbReference type="SAM" id="MobiDB-lite"/>
    </source>
</evidence>
<evidence type="ECO:0000305" key="6"/>
<evidence type="ECO:0000312" key="7">
    <source>
        <dbReference type="RGD" id="1303315"/>
    </source>
</evidence>
<evidence type="ECO:0007744" key="8">
    <source>
    </source>
</evidence>
<comment type="function">
    <text evidence="1">Accessory component of a P4-ATPase flippase complex which catalyzes the hydrolysis of ATP coupled to the transport of aminophospholipids from the outer to the inner leaflet of various membranes and ensures the maintenance of asymmetric distribution of phospholipids. Phospholipid translocation also seems to be implicated in vesicle formation and in uptake of lipid signaling molecules. The beta subunit may assist in binding of the phospholipid substrate. Required for the proper folding, assembly and ER to Golgi exit of the ATP8A2:TMEM30A flippase complex. ATP8A2:TMEM30A may be involved in regulation of neurite outgrowth, and, reconstituted to liposomes, predomiminantly transports phosphatidylserine (PS) and to a lesser extent phosphatidylethanolamine (PE). The ATP8A1:TMEM30A flippase complex seems to play a role in regulation of cell migration probably involving flippase-mediated translocation of phosphatidylethanolamine (PE) at the plasma membrane. Required for the formation of the ATP8A2, ATP8B1 and ATP8B2 P-type ATPAse intermediate phosphoenzymes. Involved in uptake of platelet-activating factor (PAF). Can also mediate the export of alpha subunits ATP8A1, ATP8B1, ATP8B2, ATP8B4, ATP10A, ATP10B, ATP10D, ATP11A, ATP11B and ATP11C from ER to other membrane localizations (By similarity).</text>
</comment>
<comment type="subunit">
    <text evidence="3">Component of various P4-ATPase flippase complexes which consists of a catalytic alpha subunit and an accessory beta subunit. Interacts with ATP8A1 to form a flippase complex; this complex forms an intermediate phosphoenzyme. Interacts with ATP8A2 to form a flippase complex (By similarity). TP8B1:TMEM30A and ATP8B2:TMEM30A flippase complexes have been shown to form intermediate phosphoenzymes in vitro. Interacts with alpha subunits ATP8A1, ATP8B1, ATP8B2, ATP8B4, ATP10A, ATP10B, ATP10D, ATP11A, ATP11B and ATP11C.</text>
</comment>
<comment type="subcellular location">
    <subcellularLocation>
        <location evidence="3">Membrane</location>
        <topology evidence="1">Multi-pass membrane protein</topology>
    </subcellularLocation>
    <subcellularLocation>
        <location evidence="3">Golgi apparatus</location>
    </subcellularLocation>
    <subcellularLocation>
        <location evidence="3">Cytoplasmic vesicle</location>
        <location evidence="3">Secretory vesicle membrane</location>
    </subcellularLocation>
    <subcellularLocation>
        <location evidence="3">Apical cell membrane</location>
    </subcellularLocation>
    <subcellularLocation>
        <location evidence="2">Photoreceptor inner segment</location>
    </subcellularLocation>
    <subcellularLocation>
        <location evidence="2">Cell projection</location>
        <location evidence="2">Cilium</location>
        <location evidence="2">Photoreceptor outer segment</location>
    </subcellularLocation>
</comment>
<comment type="domain">
    <text evidence="1">The N-terminal domain seems to play a role in the reaction cycle of the catalytic subunit such as ATP8A2.</text>
</comment>
<comment type="PTM">
    <text evidence="1">N-glycosylated. Contains high mannose-type oligosaccharides (By similarity).</text>
</comment>
<comment type="similarity">
    <text evidence="6">Belongs to the CDC50/LEM3 family.</text>
</comment>
<feature type="initiator methionine" description="Removed" evidence="3">
    <location>
        <position position="1"/>
    </location>
</feature>
<feature type="chain" id="PRO_0000244472" description="Cell cycle control protein 50A">
    <location>
        <begin position="2"/>
        <end position="328"/>
    </location>
</feature>
<feature type="topological domain" description="Cytoplasmic" evidence="4">
    <location>
        <begin position="2"/>
        <end position="49"/>
    </location>
</feature>
<feature type="transmembrane region" description="Helical" evidence="4">
    <location>
        <begin position="50"/>
        <end position="70"/>
    </location>
</feature>
<feature type="topological domain" description="Exoplasmic loop" evidence="4">
    <location>
        <begin position="71"/>
        <end position="292"/>
    </location>
</feature>
<feature type="transmembrane region" description="Helical" evidence="4">
    <location>
        <begin position="293"/>
        <end position="313"/>
    </location>
</feature>
<feature type="topological domain" description="Cytoplasmic" evidence="4">
    <location>
        <begin position="314"/>
        <end position="328"/>
    </location>
</feature>
<feature type="region of interest" description="Disordered" evidence="5">
    <location>
        <begin position="1"/>
        <end position="28"/>
    </location>
</feature>
<feature type="region of interest" description="Required for ATPase and aminophospholipid flippase activity" evidence="2">
    <location>
        <begin position="2"/>
        <end position="48"/>
    </location>
</feature>
<feature type="region of interest" description="Interaction with ATP8A2" evidence="2">
    <location>
        <begin position="49"/>
        <end position="315"/>
    </location>
</feature>
<feature type="region of interest" description="Disordered" evidence="5">
    <location>
        <begin position="102"/>
        <end position="125"/>
    </location>
</feature>
<feature type="modified residue" description="N-acetylalanine" evidence="3">
    <location>
        <position position="2"/>
    </location>
</feature>
<feature type="glycosylation site" description="N-linked (GlcNAc...) asparagine" evidence="4">
    <location>
        <position position="144"/>
    </location>
</feature>
<feature type="glycosylation site" description="N-linked (GlcNAc...) asparagine" evidence="8">
    <location>
        <position position="261"/>
    </location>
</feature>
<feature type="disulfide bond" evidence="3">
    <location>
        <begin position="121"/>
        <end position="135"/>
    </location>
</feature>
<sequence>MAMNYSAKDEVDGGPTGPPGGAAKTRRPDNTAFKQQRLPAWQPILTAGTVLPTFFIIGLIFIPIGIGIFVTSNNIREIEGNVFMYYGLSNFYQNHRRYVKSRDDSQLNGDPSALLNPSKECEPYRRNEDKPIAPCGAIANSMFNDTLELFLVANESDPKPVPILLKKKGIAWWTDKNVKFRNPPGKDSLQEKFKDTTKPVNWHKPVYELDPDDESNNGFINEDFIVWMRTAALPTFRKLYRLIERTDDLHPTLPAGQYYLNITYNYPVHFFDGRKRMILSTISWMGGKNPFLGIAYITIGSISFLLGVVLLVINHKYRNSSNTADITI</sequence>
<organism>
    <name type="scientific">Rattus norvegicus</name>
    <name type="common">Rat</name>
    <dbReference type="NCBI Taxonomy" id="10116"/>
    <lineage>
        <taxon>Eukaryota</taxon>
        <taxon>Metazoa</taxon>
        <taxon>Chordata</taxon>
        <taxon>Craniata</taxon>
        <taxon>Vertebrata</taxon>
        <taxon>Euteleostomi</taxon>
        <taxon>Mammalia</taxon>
        <taxon>Eutheria</taxon>
        <taxon>Euarchontoglires</taxon>
        <taxon>Glires</taxon>
        <taxon>Rodentia</taxon>
        <taxon>Myomorpha</taxon>
        <taxon>Muroidea</taxon>
        <taxon>Muridae</taxon>
        <taxon>Murinae</taxon>
        <taxon>Rattus</taxon>
    </lineage>
</organism>